<organism>
    <name type="scientific">Homo sapiens</name>
    <name type="common">Human</name>
    <dbReference type="NCBI Taxonomy" id="9606"/>
    <lineage>
        <taxon>Eukaryota</taxon>
        <taxon>Metazoa</taxon>
        <taxon>Chordata</taxon>
        <taxon>Craniata</taxon>
        <taxon>Vertebrata</taxon>
        <taxon>Euteleostomi</taxon>
        <taxon>Mammalia</taxon>
        <taxon>Eutheria</taxon>
        <taxon>Euarchontoglires</taxon>
        <taxon>Primates</taxon>
        <taxon>Haplorrhini</taxon>
        <taxon>Catarrhini</taxon>
        <taxon>Hominidae</taxon>
        <taxon>Homo</taxon>
    </lineage>
</organism>
<comment type="function">
    <text evidence="1 5 8">Uniporter that transports zinc(2+) into polarized cells of enterocytes, pancreatic acinar and endoderm cells across the basolateral membrane and participates, notably, in zinc excretion from the intestine by the uptake of zinc from the blood into the intestine (By similarity). The transport mechanism is temperature- and concentration-dependent and saturable (By similarity). In addition, is also a high affinity copper transporter in vitro (PubMed:36454509). Also may regulate glucose-stimulated insulin secretion (GSIS) in islets primarily through the zinc-activated SIRT1-PPARGC1A axis (By similarity). Could regulate the BMP/TGF-beta (bone morphogenetic protein/transforming growth factor-beta) signaling pathway and modulates extracellular matrix (ECM) proteins of the sclera (PubMed:24891338). Plays a role in eye development (PubMed:24891338).</text>
</comment>
<comment type="catalytic activity">
    <reaction evidence="1">
        <text>Zn(2+)(in) = Zn(2+)(out)</text>
        <dbReference type="Rhea" id="RHEA:29351"/>
        <dbReference type="ChEBI" id="CHEBI:29105"/>
    </reaction>
</comment>
<comment type="subunit">
    <text evidence="1">Homodimer.</text>
</comment>
<comment type="subcellular location">
    <subcellularLocation>
        <location evidence="1">Basolateral cell membrane</location>
        <topology evidence="1">Multi-pass membrane protein</topology>
    </subcellularLocation>
    <text evidence="1">Localized to the basolateral surfaces of enterocytes, pancreatic acinar and endoderm cells. During zinc deficiency diet, the basolateral cell membrane localization is lost in the intestine, the visceral yolk sac and acinar cell. During zinc repletion, is relocalized to the basolateral membrane of enterocytes, visceral endoderm cells and pancreatic acinar cells. Zinc can regulate the turnover of protein at the membrane. During zinc deficiency, is internalized and degraded in enterocytes, acinar cells and endoderm cells. Endocytosed through the endolysosomal degradation pathway RAB5A pathway.</text>
</comment>
<comment type="tissue specificity">
    <text evidence="4">Expressed in liver, kidney, pancreas, small intestine, colon, spleen, fetal liver and fetal kidney.</text>
</comment>
<comment type="PTM">
    <text evidence="7 9">Methylated at His-375 by METTL9.</text>
</comment>
<comment type="PTM">
    <text evidence="1">N-Glycosylated.</text>
</comment>
<comment type="disease" evidence="5 6">
    <disease id="DI-04185">
        <name>Myopia 24, autosomal dominant</name>
        <acronym>MYP24</acronym>
        <description>A refractive error of the eye, in which parallel rays from a distant object come to focus in front of the retina, vision being better for near objects than for far.</description>
        <dbReference type="MIM" id="615946"/>
    </disease>
    <text>The disease is caused by variants affecting the gene represented in this entry.</text>
</comment>
<comment type="similarity">
    <text evidence="10">Belongs to the ZIP transporter (TC 2.A.5) family.</text>
</comment>
<comment type="caution">
    <text evidence="10">It is uncertain whether Met-1 or Met-2 is the initiator.</text>
</comment>
<comment type="sequence caution" evidence="10">
    <conflict type="erroneous initiation">
        <sequence resource="EMBL-CDS" id="AAH27884"/>
    </conflict>
    <text>Truncated N-terminus.</text>
</comment>
<comment type="sequence caution" evidence="10">
    <conflict type="erroneous initiation">
        <sequence resource="EMBL-CDS" id="BAG36005"/>
    </conflict>
    <text>Truncated N-terminus.</text>
</comment>
<reference key="1">
    <citation type="journal article" date="2004" name="Nat. Genet.">
        <title>Complete sequencing and characterization of 21,243 full-length human cDNAs.</title>
        <authorList>
            <person name="Ota T."/>
            <person name="Suzuki Y."/>
            <person name="Nishikawa T."/>
            <person name="Otsuki T."/>
            <person name="Sugiyama T."/>
            <person name="Irie R."/>
            <person name="Wakamatsu A."/>
            <person name="Hayashi K."/>
            <person name="Sato H."/>
            <person name="Nagai K."/>
            <person name="Kimura K."/>
            <person name="Makita H."/>
            <person name="Sekine M."/>
            <person name="Obayashi M."/>
            <person name="Nishi T."/>
            <person name="Shibahara T."/>
            <person name="Tanaka T."/>
            <person name="Ishii S."/>
            <person name="Yamamoto J."/>
            <person name="Saito K."/>
            <person name="Kawai Y."/>
            <person name="Isono Y."/>
            <person name="Nakamura Y."/>
            <person name="Nagahari K."/>
            <person name="Murakami K."/>
            <person name="Yasuda T."/>
            <person name="Iwayanagi T."/>
            <person name="Wagatsuma M."/>
            <person name="Shiratori A."/>
            <person name="Sudo H."/>
            <person name="Hosoiri T."/>
            <person name="Kaku Y."/>
            <person name="Kodaira H."/>
            <person name="Kondo H."/>
            <person name="Sugawara M."/>
            <person name="Takahashi M."/>
            <person name="Kanda K."/>
            <person name="Yokoi T."/>
            <person name="Furuya T."/>
            <person name="Kikkawa E."/>
            <person name="Omura Y."/>
            <person name="Abe K."/>
            <person name="Kamihara K."/>
            <person name="Katsuta N."/>
            <person name="Sato K."/>
            <person name="Tanikawa M."/>
            <person name="Yamazaki M."/>
            <person name="Ninomiya K."/>
            <person name="Ishibashi T."/>
            <person name="Yamashita H."/>
            <person name="Murakawa K."/>
            <person name="Fujimori K."/>
            <person name="Tanai H."/>
            <person name="Kimata M."/>
            <person name="Watanabe M."/>
            <person name="Hiraoka S."/>
            <person name="Chiba Y."/>
            <person name="Ishida S."/>
            <person name="Ono Y."/>
            <person name="Takiguchi S."/>
            <person name="Watanabe S."/>
            <person name="Yosida M."/>
            <person name="Hotuta T."/>
            <person name="Kusano J."/>
            <person name="Kanehori K."/>
            <person name="Takahashi-Fujii A."/>
            <person name="Hara H."/>
            <person name="Tanase T.-O."/>
            <person name="Nomura Y."/>
            <person name="Togiya S."/>
            <person name="Komai F."/>
            <person name="Hara R."/>
            <person name="Takeuchi K."/>
            <person name="Arita M."/>
            <person name="Imose N."/>
            <person name="Musashino K."/>
            <person name="Yuuki H."/>
            <person name="Oshima A."/>
            <person name="Sasaki N."/>
            <person name="Aotsuka S."/>
            <person name="Yoshikawa Y."/>
            <person name="Matsunawa H."/>
            <person name="Ichihara T."/>
            <person name="Shiohata N."/>
            <person name="Sano S."/>
            <person name="Moriya S."/>
            <person name="Momiyama H."/>
            <person name="Satoh N."/>
            <person name="Takami S."/>
            <person name="Terashima Y."/>
            <person name="Suzuki O."/>
            <person name="Nakagawa S."/>
            <person name="Senoh A."/>
            <person name="Mizoguchi H."/>
            <person name="Goto Y."/>
            <person name="Shimizu F."/>
            <person name="Wakebe H."/>
            <person name="Hishigaki H."/>
            <person name="Watanabe T."/>
            <person name="Sugiyama A."/>
            <person name="Takemoto M."/>
            <person name="Kawakami B."/>
            <person name="Yamazaki M."/>
            <person name="Watanabe K."/>
            <person name="Kumagai A."/>
            <person name="Itakura S."/>
            <person name="Fukuzumi Y."/>
            <person name="Fujimori Y."/>
            <person name="Komiyama M."/>
            <person name="Tashiro H."/>
            <person name="Tanigami A."/>
            <person name="Fujiwara T."/>
            <person name="Ono T."/>
            <person name="Yamada K."/>
            <person name="Fujii Y."/>
            <person name="Ozaki K."/>
            <person name="Hirao M."/>
            <person name="Ohmori Y."/>
            <person name="Kawabata A."/>
            <person name="Hikiji T."/>
            <person name="Kobatake N."/>
            <person name="Inagaki H."/>
            <person name="Ikema Y."/>
            <person name="Okamoto S."/>
            <person name="Okitani R."/>
            <person name="Kawakami T."/>
            <person name="Noguchi S."/>
            <person name="Itoh T."/>
            <person name="Shigeta K."/>
            <person name="Senba T."/>
            <person name="Matsumura K."/>
            <person name="Nakajima Y."/>
            <person name="Mizuno T."/>
            <person name="Morinaga M."/>
            <person name="Sasaki M."/>
            <person name="Togashi T."/>
            <person name="Oyama M."/>
            <person name="Hata H."/>
            <person name="Watanabe M."/>
            <person name="Komatsu T."/>
            <person name="Mizushima-Sugano J."/>
            <person name="Satoh T."/>
            <person name="Shirai Y."/>
            <person name="Takahashi Y."/>
            <person name="Nakagawa K."/>
            <person name="Okumura K."/>
            <person name="Nagase T."/>
            <person name="Nomura N."/>
            <person name="Kikuchi H."/>
            <person name="Masuho Y."/>
            <person name="Yamashita R."/>
            <person name="Nakai K."/>
            <person name="Yada T."/>
            <person name="Nakamura Y."/>
            <person name="Ohara O."/>
            <person name="Isogai T."/>
            <person name="Sugano S."/>
        </authorList>
    </citation>
    <scope>NUCLEOTIDE SEQUENCE [LARGE SCALE MRNA]</scope>
    <source>
        <tissue>Colon</tissue>
        <tissue>Kidney</tissue>
    </source>
</reference>
<reference key="2">
    <citation type="journal article" date="2006" name="Nature">
        <title>The finished DNA sequence of human chromosome 12.</title>
        <authorList>
            <person name="Scherer S.E."/>
            <person name="Muzny D.M."/>
            <person name="Buhay C.J."/>
            <person name="Chen R."/>
            <person name="Cree A."/>
            <person name="Ding Y."/>
            <person name="Dugan-Rocha S."/>
            <person name="Gill R."/>
            <person name="Gunaratne P."/>
            <person name="Harris R.A."/>
            <person name="Hawes A.C."/>
            <person name="Hernandez J."/>
            <person name="Hodgson A.V."/>
            <person name="Hume J."/>
            <person name="Jackson A."/>
            <person name="Khan Z.M."/>
            <person name="Kovar-Smith C."/>
            <person name="Lewis L.R."/>
            <person name="Lozado R.J."/>
            <person name="Metzker M.L."/>
            <person name="Milosavljevic A."/>
            <person name="Miner G.R."/>
            <person name="Montgomery K.T."/>
            <person name="Morgan M.B."/>
            <person name="Nazareth L.V."/>
            <person name="Scott G."/>
            <person name="Sodergren E."/>
            <person name="Song X.-Z."/>
            <person name="Steffen D."/>
            <person name="Lovering R.C."/>
            <person name="Wheeler D.A."/>
            <person name="Worley K.C."/>
            <person name="Yuan Y."/>
            <person name="Zhang Z."/>
            <person name="Adams C.Q."/>
            <person name="Ansari-Lari M.A."/>
            <person name="Ayele M."/>
            <person name="Brown M.J."/>
            <person name="Chen G."/>
            <person name="Chen Z."/>
            <person name="Clerc-Blankenburg K.P."/>
            <person name="Davis C."/>
            <person name="Delgado O."/>
            <person name="Dinh H.H."/>
            <person name="Draper H."/>
            <person name="Gonzalez-Garay M.L."/>
            <person name="Havlak P."/>
            <person name="Jackson L.R."/>
            <person name="Jacob L.S."/>
            <person name="Kelly S.H."/>
            <person name="Li L."/>
            <person name="Li Z."/>
            <person name="Liu J."/>
            <person name="Liu W."/>
            <person name="Lu J."/>
            <person name="Maheshwari M."/>
            <person name="Nguyen B.-V."/>
            <person name="Okwuonu G.O."/>
            <person name="Pasternak S."/>
            <person name="Perez L.M."/>
            <person name="Plopper F.J.H."/>
            <person name="Santibanez J."/>
            <person name="Shen H."/>
            <person name="Tabor P.E."/>
            <person name="Verduzco D."/>
            <person name="Waldron L."/>
            <person name="Wang Q."/>
            <person name="Williams G.A."/>
            <person name="Zhang J."/>
            <person name="Zhou J."/>
            <person name="Allen C.C."/>
            <person name="Amin A.G."/>
            <person name="Anyalebechi V."/>
            <person name="Bailey M."/>
            <person name="Barbaria J.A."/>
            <person name="Bimage K.E."/>
            <person name="Bryant N.P."/>
            <person name="Burch P.E."/>
            <person name="Burkett C.E."/>
            <person name="Burrell K.L."/>
            <person name="Calderon E."/>
            <person name="Cardenas V."/>
            <person name="Carter K."/>
            <person name="Casias K."/>
            <person name="Cavazos I."/>
            <person name="Cavazos S.R."/>
            <person name="Ceasar H."/>
            <person name="Chacko J."/>
            <person name="Chan S.N."/>
            <person name="Chavez D."/>
            <person name="Christopoulos C."/>
            <person name="Chu J."/>
            <person name="Cockrell R."/>
            <person name="Cox C.D."/>
            <person name="Dang M."/>
            <person name="Dathorne S.R."/>
            <person name="David R."/>
            <person name="Davis C.M."/>
            <person name="Davy-Carroll L."/>
            <person name="Deshazo D.R."/>
            <person name="Donlin J.E."/>
            <person name="D'Souza L."/>
            <person name="Eaves K.A."/>
            <person name="Egan A."/>
            <person name="Emery-Cohen A.J."/>
            <person name="Escotto M."/>
            <person name="Flagg N."/>
            <person name="Forbes L.D."/>
            <person name="Gabisi A.M."/>
            <person name="Garza M."/>
            <person name="Hamilton C."/>
            <person name="Henderson N."/>
            <person name="Hernandez O."/>
            <person name="Hines S."/>
            <person name="Hogues M.E."/>
            <person name="Huang M."/>
            <person name="Idlebird D.G."/>
            <person name="Johnson R."/>
            <person name="Jolivet A."/>
            <person name="Jones S."/>
            <person name="Kagan R."/>
            <person name="King L.M."/>
            <person name="Leal B."/>
            <person name="Lebow H."/>
            <person name="Lee S."/>
            <person name="LeVan J.M."/>
            <person name="Lewis L.C."/>
            <person name="London P."/>
            <person name="Lorensuhewa L.M."/>
            <person name="Loulseged H."/>
            <person name="Lovett D.A."/>
            <person name="Lucier A."/>
            <person name="Lucier R.L."/>
            <person name="Ma J."/>
            <person name="Madu R.C."/>
            <person name="Mapua P."/>
            <person name="Martindale A.D."/>
            <person name="Martinez E."/>
            <person name="Massey E."/>
            <person name="Mawhiney S."/>
            <person name="Meador M.G."/>
            <person name="Mendez S."/>
            <person name="Mercado C."/>
            <person name="Mercado I.C."/>
            <person name="Merritt C.E."/>
            <person name="Miner Z.L."/>
            <person name="Minja E."/>
            <person name="Mitchell T."/>
            <person name="Mohabbat F."/>
            <person name="Mohabbat K."/>
            <person name="Montgomery B."/>
            <person name="Moore N."/>
            <person name="Morris S."/>
            <person name="Munidasa M."/>
            <person name="Ngo R.N."/>
            <person name="Nguyen N.B."/>
            <person name="Nickerson E."/>
            <person name="Nwaokelemeh O.O."/>
            <person name="Nwokenkwo S."/>
            <person name="Obregon M."/>
            <person name="Oguh M."/>
            <person name="Oragunye N."/>
            <person name="Oviedo R.J."/>
            <person name="Parish B.J."/>
            <person name="Parker D.N."/>
            <person name="Parrish J."/>
            <person name="Parks K.L."/>
            <person name="Paul H.A."/>
            <person name="Payton B.A."/>
            <person name="Perez A."/>
            <person name="Perrin W."/>
            <person name="Pickens A."/>
            <person name="Primus E.L."/>
            <person name="Pu L.-L."/>
            <person name="Puazo M."/>
            <person name="Quiles M.M."/>
            <person name="Quiroz J.B."/>
            <person name="Rabata D."/>
            <person name="Reeves K."/>
            <person name="Ruiz S.J."/>
            <person name="Shao H."/>
            <person name="Sisson I."/>
            <person name="Sonaike T."/>
            <person name="Sorelle R.P."/>
            <person name="Sutton A.E."/>
            <person name="Svatek A.F."/>
            <person name="Svetz L.A."/>
            <person name="Tamerisa K.S."/>
            <person name="Taylor T.R."/>
            <person name="Teague B."/>
            <person name="Thomas N."/>
            <person name="Thorn R.D."/>
            <person name="Trejos Z.Y."/>
            <person name="Trevino B.K."/>
            <person name="Ukegbu O.N."/>
            <person name="Urban J.B."/>
            <person name="Vasquez L.I."/>
            <person name="Vera V.A."/>
            <person name="Villasana D.M."/>
            <person name="Wang L."/>
            <person name="Ward-Moore S."/>
            <person name="Warren J.T."/>
            <person name="Wei X."/>
            <person name="White F."/>
            <person name="Williamson A.L."/>
            <person name="Wleczyk R."/>
            <person name="Wooden H.S."/>
            <person name="Wooden S.H."/>
            <person name="Yen J."/>
            <person name="Yoon L."/>
            <person name="Yoon V."/>
            <person name="Zorrilla S.E."/>
            <person name="Nelson D."/>
            <person name="Kucherlapati R."/>
            <person name="Weinstock G."/>
            <person name="Gibbs R.A."/>
        </authorList>
    </citation>
    <scope>NUCLEOTIDE SEQUENCE [LARGE SCALE GENOMIC DNA]</scope>
</reference>
<reference key="3">
    <citation type="journal article" date="2004" name="Genome Res.">
        <title>The status, quality, and expansion of the NIH full-length cDNA project: the Mammalian Gene Collection (MGC).</title>
        <authorList>
            <consortium name="The MGC Project Team"/>
        </authorList>
    </citation>
    <scope>NUCLEOTIDE SEQUENCE [LARGE SCALE MRNA]</scope>
    <source>
        <tissue>Pancreas</tissue>
    </source>
</reference>
<reference key="4">
    <citation type="journal article" date="2004" name="J. Biol. Chem.">
        <title>The mammalian Zip5 protein is a zinc transporter that localizes to the basolateral surface of polarized cells.</title>
        <authorList>
            <person name="Wang F."/>
            <person name="Kim B.-E."/>
            <person name="Petris M.J."/>
            <person name="Eide D.J."/>
        </authorList>
    </citation>
    <scope>TISSUE SPECIFICITY</scope>
</reference>
<reference key="5">
    <citation type="journal article" date="2014" name="J. Med. Genet.">
        <title>SLC39A5 mutations interfering with the BMP/TGF-beta pathway in non-syndromic high myopia.</title>
        <authorList>
            <person name="Guo H."/>
            <person name="Jin X."/>
            <person name="Zhu T."/>
            <person name="Wang T."/>
            <person name="Tong P."/>
            <person name="Tian L."/>
            <person name="Peng Y."/>
            <person name="Sun L."/>
            <person name="Wan A."/>
            <person name="Chen J."/>
            <person name="Liu Y."/>
            <person name="Li Y."/>
            <person name="Tian Q."/>
            <person name="Xia L."/>
            <person name="Zhang L."/>
            <person name="Pan Y."/>
            <person name="Lu L."/>
            <person name="Liu Q."/>
            <person name="Shen L."/>
            <person name="Li Y."/>
            <person name="Xiong W."/>
            <person name="Li J."/>
            <person name="Tang B."/>
            <person name="Feng Y."/>
            <person name="Zhang X."/>
            <person name="Zhang Z."/>
            <person name="Pan Q."/>
            <person name="Hu Z."/>
            <person name="Xia K."/>
        </authorList>
    </citation>
    <scope>FUNCTION</scope>
    <scope>VARIANT MYP24 THR-304</scope>
    <scope>CHARACTERIZATION OF VARIANT MYP24 THR-304</scope>
</reference>
<reference key="6">
    <citation type="journal article" date="2023" name="BioMetals">
        <title>Functional characterization of SLC39 family members ZIP5 and ZIP10 in overexpressing HEK293 cells reveals selective copper transport activity.</title>
        <authorList>
            <person name="Polesel M."/>
            <person name="Ingles-Prieto A."/>
            <person name="Christodoulaki E."/>
            <person name="Ferrada E."/>
            <person name="Doucerain C."/>
            <person name="Altermatt P."/>
            <person name="Knecht M."/>
            <person name="Kuhn M."/>
            <person name="Steck A.L."/>
            <person name="Wilhelm M."/>
            <person name="Manolova V."/>
        </authorList>
    </citation>
    <scope>FUNCTION</scope>
</reference>
<reference key="7">
    <citation type="journal article" date="2021" name="Nat. Commun.">
        <title>The methyltransferase METTL9 mediates pervasive 1-methylhistidine modification in mammalian proteomes.</title>
        <authorList>
            <person name="Davydova E."/>
            <person name="Shimazu T."/>
            <person name="Schuhmacher M.K."/>
            <person name="Jakobsson M.E."/>
            <person name="Willemen H.L.D.M."/>
            <person name="Liu T."/>
            <person name="Moen A."/>
            <person name="Ho A.Y.Y."/>
            <person name="Malecki J."/>
            <person name="Schroer L."/>
            <person name="Pinto R."/>
            <person name="Suzuki T."/>
            <person name="Groensberg I.A."/>
            <person name="Sohtome Y."/>
            <person name="Akakabe M."/>
            <person name="Weirich S."/>
            <person name="Kikuchi M."/>
            <person name="Olsen J.V."/>
            <person name="Dohmae N."/>
            <person name="Umehara T."/>
            <person name="Sodeoka M."/>
            <person name="Siino V."/>
            <person name="McDonough M.A."/>
            <person name="Eijkelkamp N."/>
            <person name="Schofield C.J."/>
            <person name="Jeltsch A."/>
            <person name="Shinkai Y."/>
            <person name="Falnes P.O."/>
        </authorList>
    </citation>
    <scope>METHYLATION AT HIS-375</scope>
    <scope>MUTAGENESIS OF HIS-373; HIS-375 AND HIS-377</scope>
</reference>
<reference evidence="12 13 14" key="8">
    <citation type="journal article" date="2023" name="Cell Discov.">
        <title>Molecular basis for METTL9-mediated N1-histidine methylation.</title>
        <authorList>
            <person name="Wang X."/>
            <person name="Xie H."/>
            <person name="Guo Q."/>
            <person name="Cao D."/>
            <person name="Ru W."/>
            <person name="Zhao S."/>
            <person name="Zhu Z."/>
            <person name="Zhang J."/>
            <person name="Pan W."/>
            <person name="Yao X."/>
            <person name="Xu C."/>
        </authorList>
    </citation>
    <scope>X-RAY CRYSTALLOGRAPHY (1.69 ANGSTROMS) OF 369-380 IN COMPLEX WITH METTL9</scope>
    <scope>METHYLATION AT HIS-375</scope>
    <scope>MUTAGENESIS OF GLY-372; HIS-373; SER-374 AND HIS-375</scope>
</reference>
<reference key="9">
    <citation type="journal article" date="2015" name="Invest. Ophthalmol. Vis. Sci.">
        <title>Detection of mutations in LRPAP1, CTSH, LEPREL1, ZNF644, SLC39A5, and SCO2 in 298 families with early-onset high myopia by exome sequencing.</title>
        <authorList>
            <person name="Jiang D."/>
            <person name="Li J."/>
            <person name="Xiao X."/>
            <person name="Li S."/>
            <person name="Jia X."/>
            <person name="Sun W."/>
            <person name="Guo X."/>
            <person name="Zhang Q."/>
        </authorList>
    </citation>
    <scope>VARIANT MYP24 ALA-413</scope>
</reference>
<proteinExistence type="evidence at protein level"/>
<evidence type="ECO:0000250" key="1">
    <source>
        <dbReference type="UniProtKB" id="Q9D856"/>
    </source>
</evidence>
<evidence type="ECO:0000255" key="2"/>
<evidence type="ECO:0000256" key="3">
    <source>
        <dbReference type="SAM" id="MobiDB-lite"/>
    </source>
</evidence>
<evidence type="ECO:0000269" key="4">
    <source>
    </source>
</evidence>
<evidence type="ECO:0000269" key="5">
    <source>
    </source>
</evidence>
<evidence type="ECO:0000269" key="6">
    <source>
    </source>
</evidence>
<evidence type="ECO:0000269" key="7">
    <source>
    </source>
</evidence>
<evidence type="ECO:0000269" key="8">
    <source>
    </source>
</evidence>
<evidence type="ECO:0000269" key="9">
    <source>
    </source>
</evidence>
<evidence type="ECO:0000305" key="10"/>
<evidence type="ECO:0000312" key="11">
    <source>
        <dbReference type="HGNC" id="HGNC:20502"/>
    </source>
</evidence>
<evidence type="ECO:0007744" key="12">
    <source>
        <dbReference type="PDB" id="7Y9C"/>
    </source>
</evidence>
<evidence type="ECO:0007744" key="13">
    <source>
        <dbReference type="PDB" id="7YF2"/>
    </source>
</evidence>
<evidence type="ECO:0007744" key="14">
    <source>
        <dbReference type="PDB" id="7YF4"/>
    </source>
</evidence>
<dbReference type="EMBL" id="AK172768">
    <property type="protein sequence ID" value="BAD18751.1"/>
    <property type="molecule type" value="mRNA"/>
</dbReference>
<dbReference type="EMBL" id="AK313188">
    <property type="protein sequence ID" value="BAG36005.1"/>
    <property type="status" value="ALT_INIT"/>
    <property type="molecule type" value="mRNA"/>
</dbReference>
<dbReference type="EMBL" id="AC073896">
    <property type="status" value="NOT_ANNOTATED_CDS"/>
    <property type="molecule type" value="Genomic_DNA"/>
</dbReference>
<dbReference type="EMBL" id="BC027884">
    <property type="protein sequence ID" value="AAH27884.1"/>
    <property type="status" value="ALT_INIT"/>
    <property type="molecule type" value="mRNA"/>
</dbReference>
<dbReference type="CCDS" id="CCDS8912.2"/>
<dbReference type="RefSeq" id="NP_001128667.1">
    <property type="nucleotide sequence ID" value="NM_001135195.1"/>
</dbReference>
<dbReference type="RefSeq" id="NP_775867.2">
    <property type="nucleotide sequence ID" value="NM_173596.3"/>
</dbReference>
<dbReference type="RefSeq" id="XP_005268860.1">
    <property type="nucleotide sequence ID" value="XM_005268803.3"/>
</dbReference>
<dbReference type="RefSeq" id="XP_011536500.1">
    <property type="nucleotide sequence ID" value="XM_011538198.1"/>
</dbReference>
<dbReference type="RefSeq" id="XP_011536501.1">
    <property type="nucleotide sequence ID" value="XM_011538199.3"/>
</dbReference>
<dbReference type="RefSeq" id="XP_011536502.1">
    <property type="nucleotide sequence ID" value="XM_011538200.3"/>
</dbReference>
<dbReference type="RefSeq" id="XP_011536503.1">
    <property type="nucleotide sequence ID" value="XM_011538201.3"/>
</dbReference>
<dbReference type="RefSeq" id="XP_047284669.1">
    <property type="nucleotide sequence ID" value="XM_047428713.1"/>
</dbReference>
<dbReference type="RefSeq" id="XP_047284670.1">
    <property type="nucleotide sequence ID" value="XM_047428714.1"/>
</dbReference>
<dbReference type="RefSeq" id="XP_047284671.1">
    <property type="nucleotide sequence ID" value="XM_047428715.1"/>
</dbReference>
<dbReference type="RefSeq" id="XP_054227755.1">
    <property type="nucleotide sequence ID" value="XM_054371780.1"/>
</dbReference>
<dbReference type="RefSeq" id="XP_054227756.1">
    <property type="nucleotide sequence ID" value="XM_054371781.1"/>
</dbReference>
<dbReference type="RefSeq" id="XP_054227757.1">
    <property type="nucleotide sequence ID" value="XM_054371782.1"/>
</dbReference>
<dbReference type="RefSeq" id="XP_054227758.1">
    <property type="nucleotide sequence ID" value="XM_054371783.1"/>
</dbReference>
<dbReference type="RefSeq" id="XP_054227759.1">
    <property type="nucleotide sequence ID" value="XM_054371784.1"/>
</dbReference>
<dbReference type="RefSeq" id="XP_054227760.1">
    <property type="nucleotide sequence ID" value="XM_054371785.1"/>
</dbReference>
<dbReference type="RefSeq" id="XP_054227761.1">
    <property type="nucleotide sequence ID" value="XM_054371786.1"/>
</dbReference>
<dbReference type="PDB" id="7Y9C">
    <property type="method" value="X-ray"/>
    <property type="resolution" value="2.10 A"/>
    <property type="chains" value="C/D=369-380"/>
</dbReference>
<dbReference type="PDB" id="7YF2">
    <property type="method" value="X-ray"/>
    <property type="resolution" value="1.69 A"/>
    <property type="chains" value="C/D=369-380"/>
</dbReference>
<dbReference type="PDB" id="7YF4">
    <property type="method" value="X-ray"/>
    <property type="resolution" value="2.75 A"/>
    <property type="chains" value="C/D=369-380"/>
</dbReference>
<dbReference type="PDBsum" id="7Y9C"/>
<dbReference type="PDBsum" id="7YF2"/>
<dbReference type="PDBsum" id="7YF4"/>
<dbReference type="SMR" id="Q6ZMH5"/>
<dbReference type="BioGRID" id="129541">
    <property type="interactions" value="51"/>
</dbReference>
<dbReference type="FunCoup" id="Q6ZMH5">
    <property type="interactions" value="48"/>
</dbReference>
<dbReference type="IntAct" id="Q6ZMH5">
    <property type="interactions" value="47"/>
</dbReference>
<dbReference type="STRING" id="9606.ENSP00000266980"/>
<dbReference type="DrugBank" id="DB14533">
    <property type="generic name" value="Zinc chloride"/>
</dbReference>
<dbReference type="DrugBank" id="DB14548">
    <property type="generic name" value="Zinc sulfate, unspecified form"/>
</dbReference>
<dbReference type="TCDB" id="2.A.5.4.10">
    <property type="family name" value="the zinc (zn(2+))-iron (fe(2+)) permease (zip) family"/>
</dbReference>
<dbReference type="GlyCosmos" id="Q6ZMH5">
    <property type="glycosylation" value="3 sites, 1 glycan"/>
</dbReference>
<dbReference type="GlyGen" id="Q6ZMH5">
    <property type="glycosylation" value="6 sites, 3 N-linked glycans (1 site), 2 O-linked glycans (3 sites)"/>
</dbReference>
<dbReference type="iPTMnet" id="Q6ZMH5"/>
<dbReference type="PhosphoSitePlus" id="Q6ZMH5"/>
<dbReference type="BioMuta" id="SLC39A5"/>
<dbReference type="DMDM" id="332278218"/>
<dbReference type="jPOST" id="Q6ZMH5"/>
<dbReference type="MassIVE" id="Q6ZMH5"/>
<dbReference type="PaxDb" id="9606-ENSP00000266980"/>
<dbReference type="PeptideAtlas" id="Q6ZMH5"/>
<dbReference type="ProteomicsDB" id="67869"/>
<dbReference type="TopDownProteomics" id="Q6ZMH5"/>
<dbReference type="Antibodypedia" id="15788">
    <property type="antibodies" value="94 antibodies from 27 providers"/>
</dbReference>
<dbReference type="DNASU" id="283375"/>
<dbReference type="Ensembl" id="ENST00000266980.8">
    <property type="protein sequence ID" value="ENSP00000266980.4"/>
    <property type="gene ID" value="ENSG00000139540.12"/>
</dbReference>
<dbReference type="Ensembl" id="ENST00000454355.7">
    <property type="protein sequence ID" value="ENSP00000405360.2"/>
    <property type="gene ID" value="ENSG00000139540.12"/>
</dbReference>
<dbReference type="GeneID" id="283375"/>
<dbReference type="KEGG" id="hsa:283375"/>
<dbReference type="MANE-Select" id="ENST00000454355.7">
    <property type="protein sequence ID" value="ENSP00000405360.2"/>
    <property type="RefSeq nucleotide sequence ID" value="NM_173596.3"/>
    <property type="RefSeq protein sequence ID" value="NP_775867.2"/>
</dbReference>
<dbReference type="UCSC" id="uc010sqj.3">
    <property type="organism name" value="human"/>
</dbReference>
<dbReference type="AGR" id="HGNC:20502"/>
<dbReference type="CTD" id="283375"/>
<dbReference type="DisGeNET" id="283375"/>
<dbReference type="GeneCards" id="SLC39A5"/>
<dbReference type="HGNC" id="HGNC:20502">
    <property type="gene designation" value="SLC39A5"/>
</dbReference>
<dbReference type="HPA" id="ENSG00000139540">
    <property type="expression patterns" value="Group enriched (intestine, kidney, liver, pancreas)"/>
</dbReference>
<dbReference type="MalaCards" id="SLC39A5"/>
<dbReference type="MIM" id="608730">
    <property type="type" value="gene"/>
</dbReference>
<dbReference type="MIM" id="615946">
    <property type="type" value="phenotype"/>
</dbReference>
<dbReference type="neXtProt" id="NX_Q6ZMH5"/>
<dbReference type="OpenTargets" id="ENSG00000139540"/>
<dbReference type="PharmGKB" id="PA134872687"/>
<dbReference type="VEuPathDB" id="HostDB:ENSG00000139540"/>
<dbReference type="eggNOG" id="KOG2693">
    <property type="taxonomic scope" value="Eukaryota"/>
</dbReference>
<dbReference type="GeneTree" id="ENSGT00940000161155"/>
<dbReference type="HOGENOM" id="CLU_015114_13_2_1"/>
<dbReference type="InParanoid" id="Q6ZMH5"/>
<dbReference type="OMA" id="GANITWM"/>
<dbReference type="OrthoDB" id="200954at2759"/>
<dbReference type="PAN-GO" id="Q6ZMH5">
    <property type="GO annotations" value="5 GO annotations based on evolutionary models"/>
</dbReference>
<dbReference type="PhylomeDB" id="Q6ZMH5"/>
<dbReference type="TreeFam" id="TF318470"/>
<dbReference type="PathwayCommons" id="Q6ZMH5"/>
<dbReference type="Reactome" id="R-HSA-442380">
    <property type="pathway name" value="Zinc influx into cells by the SLC39 gene family"/>
</dbReference>
<dbReference type="SignaLink" id="Q6ZMH5"/>
<dbReference type="BioGRID-ORCS" id="283375">
    <property type="hits" value="160 hits in 1146 CRISPR screens"/>
</dbReference>
<dbReference type="GenomeRNAi" id="283375"/>
<dbReference type="Pharos" id="Q6ZMH5">
    <property type="development level" value="Tbio"/>
</dbReference>
<dbReference type="PRO" id="PR:Q6ZMH5"/>
<dbReference type="Proteomes" id="UP000005640">
    <property type="component" value="Chromosome 12"/>
</dbReference>
<dbReference type="RNAct" id="Q6ZMH5">
    <property type="molecule type" value="protein"/>
</dbReference>
<dbReference type="Bgee" id="ENSG00000139540">
    <property type="expression patterns" value="Expressed in body of pancreas and 128 other cell types or tissues"/>
</dbReference>
<dbReference type="ExpressionAtlas" id="Q6ZMH5">
    <property type="expression patterns" value="baseline and differential"/>
</dbReference>
<dbReference type="GO" id="GO:0016323">
    <property type="term" value="C:basolateral plasma membrane"/>
    <property type="evidence" value="ECO:0000250"/>
    <property type="project" value="UniProtKB"/>
</dbReference>
<dbReference type="GO" id="GO:0070062">
    <property type="term" value="C:extracellular exosome"/>
    <property type="evidence" value="ECO:0007005"/>
    <property type="project" value="UniProtKB"/>
</dbReference>
<dbReference type="GO" id="GO:0005886">
    <property type="term" value="C:plasma membrane"/>
    <property type="evidence" value="ECO:0000318"/>
    <property type="project" value="GO_Central"/>
</dbReference>
<dbReference type="GO" id="GO:0140410">
    <property type="term" value="F:monoatomic cation:bicarbonate symporter activity"/>
    <property type="evidence" value="ECO:0000318"/>
    <property type="project" value="GO_Central"/>
</dbReference>
<dbReference type="GO" id="GO:0005385">
    <property type="term" value="F:zinc ion transmembrane transporter activity"/>
    <property type="evidence" value="ECO:0000250"/>
    <property type="project" value="UniProtKB"/>
</dbReference>
<dbReference type="GO" id="GO:0030509">
    <property type="term" value="P:BMP signaling pathway"/>
    <property type="evidence" value="ECO:0000315"/>
    <property type="project" value="UniProtKB"/>
</dbReference>
<dbReference type="GO" id="GO:0034224">
    <property type="term" value="P:cellular response to zinc ion starvation"/>
    <property type="evidence" value="ECO:0007669"/>
    <property type="project" value="Ensembl"/>
</dbReference>
<dbReference type="GO" id="GO:0001654">
    <property type="term" value="P:eye development"/>
    <property type="evidence" value="ECO:0000315"/>
    <property type="project" value="UniProtKB"/>
</dbReference>
<dbReference type="GO" id="GO:0070315">
    <property type="term" value="P:G1 to G0 transition involved in cell differentiation"/>
    <property type="evidence" value="ECO:0000250"/>
    <property type="project" value="CAFA"/>
</dbReference>
<dbReference type="GO" id="GO:0030003">
    <property type="term" value="P:intracellular monoatomic cation homeostasis"/>
    <property type="evidence" value="ECO:0000318"/>
    <property type="project" value="GO_Central"/>
</dbReference>
<dbReference type="GO" id="GO:0061351">
    <property type="term" value="P:neural precursor cell proliferation"/>
    <property type="evidence" value="ECO:0000250"/>
    <property type="project" value="UniProtKB"/>
</dbReference>
<dbReference type="GO" id="GO:0048026">
    <property type="term" value="P:positive regulation of mRNA splicing, via spliceosome"/>
    <property type="evidence" value="ECO:0007669"/>
    <property type="project" value="Ensembl"/>
</dbReference>
<dbReference type="GO" id="GO:0071578">
    <property type="term" value="P:zinc ion import across plasma membrane"/>
    <property type="evidence" value="ECO:0000318"/>
    <property type="project" value="GO_Central"/>
</dbReference>
<dbReference type="GO" id="GO:0071577">
    <property type="term" value="P:zinc ion transmembrane transport"/>
    <property type="evidence" value="ECO:0000250"/>
    <property type="project" value="UniProtKB"/>
</dbReference>
<dbReference type="GO" id="GO:0006829">
    <property type="term" value="P:zinc ion transport"/>
    <property type="evidence" value="ECO:0000250"/>
    <property type="project" value="UniProtKB"/>
</dbReference>
<dbReference type="InterPro" id="IPR003689">
    <property type="entry name" value="ZIP"/>
</dbReference>
<dbReference type="InterPro" id="IPR050799">
    <property type="entry name" value="ZIP_Transporter"/>
</dbReference>
<dbReference type="PANTHER" id="PTHR12191">
    <property type="entry name" value="SOLUTE CARRIER FAMILY 39"/>
    <property type="match status" value="1"/>
</dbReference>
<dbReference type="PANTHER" id="PTHR12191:SF17">
    <property type="entry name" value="ZINC TRANSPORTER ZIP5"/>
    <property type="match status" value="1"/>
</dbReference>
<dbReference type="Pfam" id="PF02535">
    <property type="entry name" value="Zip"/>
    <property type="match status" value="1"/>
</dbReference>
<accession>Q6ZMH5</accession>
<accession>B2R808</accession>
<accession>Q8N6Y3</accession>
<gene>
    <name evidence="11" type="primary">SLC39A5</name>
    <name evidence="1" type="synonym">ZIP5</name>
</gene>
<protein>
    <recommendedName>
        <fullName evidence="10">Zinc transporter ZIP5</fullName>
    </recommendedName>
    <alternativeName>
        <fullName>Solute carrier family 39 member 5</fullName>
    </alternativeName>
    <alternativeName>
        <fullName evidence="1">Zrt- and Irt-like protein 5</fullName>
        <shortName evidence="1">ZIP-5</shortName>
    </alternativeName>
</protein>
<sequence length="540" mass="56461">MMGSPVSHLLAGFCVWVVLGWVGGSVPNLGPAEQEQNHYLAQLFGLYGENGTLTAGGLARLLHSLGLGRVQGLRLGQHGPLTGRAASPAADNSTHRPQNPELSVDVWAGMPLGPSGWGDLEESKAPHLPRGPAPSGLDLLHRLLLLDHSLADHLNEDCLNGSQLLVNFGLSPAAPLTPRQFALLCPALLYQIDSRVCIGAPAPAPPGDLLSALLQSALAVLLLSLPSPLSLLLLRLLGPRLLRPLLGFLGALAVGTLCGDALLHLLPHAQEGRHAGPGGLPEKDLGPGLSVLGGLFLLFVLENMLGLLRHRGLRPRCCRRKRRNLETRNLDPENGSGMALQPLQAAPEPGAQGQREKNSQHPPALAPPGHQGHSHGHQGGTDITWMVLLGDGLHNLTDGLAIGAAFSDGFSSGLSTTLAVFCHELPHELGDFAMLLQSGLSFRRLLLLSLVSGALGLGGAVLGVGLSLGPVPLTPWVFGVTAGVFLYVALVDMLPALLRPPEPLPTPHVLLQGLGLLLGGGLMLAITLLEERLLPVTTEG</sequence>
<feature type="signal peptide" evidence="2">
    <location>
        <begin position="1"/>
        <end position="20"/>
    </location>
</feature>
<feature type="chain" id="PRO_0000045795" description="Zinc transporter ZIP5">
    <location>
        <begin position="21"/>
        <end position="540"/>
    </location>
</feature>
<feature type="topological domain" description="Extracellular" evidence="1">
    <location>
        <begin position="21"/>
        <end position="212"/>
    </location>
</feature>
<feature type="transmembrane region" description="Helical" evidence="2">
    <location>
        <begin position="213"/>
        <end position="233"/>
    </location>
</feature>
<feature type="topological domain" description="Cytoplasmic" evidence="2">
    <location>
        <begin position="234"/>
        <end position="244"/>
    </location>
</feature>
<feature type="transmembrane region" description="Helical" evidence="2">
    <location>
        <begin position="245"/>
        <end position="265"/>
    </location>
</feature>
<feature type="topological domain" description="Extracellular" evidence="2">
    <location>
        <begin position="266"/>
        <end position="287"/>
    </location>
</feature>
<feature type="transmembrane region" description="Helical" evidence="2">
    <location>
        <begin position="288"/>
        <end position="308"/>
    </location>
</feature>
<feature type="topological domain" description="Cytoplasmic" evidence="2">
    <location>
        <begin position="309"/>
        <end position="444"/>
    </location>
</feature>
<feature type="transmembrane region" description="Helical" evidence="2">
    <location>
        <begin position="445"/>
        <end position="465"/>
    </location>
</feature>
<feature type="topological domain" description="Extracellular" evidence="2">
    <location>
        <begin position="466"/>
        <end position="470"/>
    </location>
</feature>
<feature type="transmembrane region" description="Helical" evidence="2">
    <location>
        <begin position="471"/>
        <end position="491"/>
    </location>
</feature>
<feature type="topological domain" description="Cytoplasmic" evidence="2">
    <location>
        <begin position="492"/>
        <end position="508"/>
    </location>
</feature>
<feature type="transmembrane region" description="Helical" evidence="2">
    <location>
        <begin position="509"/>
        <end position="529"/>
    </location>
</feature>
<feature type="topological domain" description="Extracellular" evidence="1">
    <location>
        <begin position="530"/>
        <end position="540"/>
    </location>
</feature>
<feature type="region of interest" description="Disordered" evidence="3">
    <location>
        <begin position="78"/>
        <end position="101"/>
    </location>
</feature>
<feature type="region of interest" description="Disordered" evidence="3">
    <location>
        <begin position="324"/>
        <end position="377"/>
    </location>
</feature>
<feature type="compositionally biased region" description="Polar residues" evidence="3">
    <location>
        <begin position="90"/>
        <end position="101"/>
    </location>
</feature>
<feature type="modified residue" description="Phosphoserine" evidence="1">
    <location>
        <position position="336"/>
    </location>
</feature>
<feature type="modified residue" description="Pros-methylhistidine" evidence="7 9">
    <location>
        <position position="375"/>
    </location>
</feature>
<feature type="glycosylation site" description="N-linked (GlcNAc...) asparagine" evidence="2">
    <location>
        <position position="50"/>
    </location>
</feature>
<feature type="glycosylation site" description="N-linked (GlcNAc...) asparagine" evidence="2">
    <location>
        <position position="160"/>
    </location>
</feature>
<feature type="sequence variant" id="VAR_071911" description="In MYP24; affects the BMP/TGF-beta pathway by suppressing expression of SMAD1; loss of function mutation; dbSNP:rs587777625." evidence="5">
    <original>M</original>
    <variation>T</variation>
    <location>
        <position position="304"/>
    </location>
</feature>
<feature type="sequence variant" id="VAR_074009" description="In MYP24; uncertain significance." evidence="6">
    <original>G</original>
    <variation>A</variation>
    <location>
        <position position="413"/>
    </location>
</feature>
<feature type="mutagenesis site" description="Reduced binding to METTL9." evidence="9">
    <original>G</original>
    <variation>V</variation>
    <location>
        <position position="372"/>
    </location>
</feature>
<feature type="mutagenesis site" description="Reduced histidine methylation by METTL9." evidence="7 9">
    <original>H</original>
    <variation>A</variation>
    <location>
        <position position="373"/>
    </location>
</feature>
<feature type="mutagenesis site" description="Reduced binding to METTL9." evidence="9">
    <original>S</original>
    <variation>R</variation>
    <location>
        <position position="374"/>
    </location>
</feature>
<feature type="mutagenesis site" description="Abolished histidine methylation by METTL9." evidence="7 9">
    <original>H</original>
    <variation>A</variation>
    <location>
        <position position="375"/>
    </location>
</feature>
<feature type="mutagenesis site" description="Does not affect histidine methylation by METTL9." evidence="7">
    <original>H</original>
    <variation>A</variation>
    <location>
        <position position="377"/>
    </location>
</feature>
<name>S39A5_HUMAN</name>
<keyword id="KW-0002">3D-structure</keyword>
<keyword id="KW-1003">Cell membrane</keyword>
<keyword id="KW-0225">Disease variant</keyword>
<keyword id="KW-0325">Glycoprotein</keyword>
<keyword id="KW-0406">Ion transport</keyword>
<keyword id="KW-0472">Membrane</keyword>
<keyword id="KW-0488">Methylation</keyword>
<keyword id="KW-0597">Phosphoprotein</keyword>
<keyword id="KW-1267">Proteomics identification</keyword>
<keyword id="KW-1185">Reference proteome</keyword>
<keyword id="KW-0732">Signal</keyword>
<keyword id="KW-0812">Transmembrane</keyword>
<keyword id="KW-1133">Transmembrane helix</keyword>
<keyword id="KW-0813">Transport</keyword>
<keyword id="KW-0862">Zinc</keyword>
<keyword id="KW-0864">Zinc transport</keyword>